<accession>P03162</accession>
<sequence>MQKLTRNHWIGLGDCFGGITTVYCGEKLKLLTIFLVCVLGCQLLRNIEVEMPRPLKQSLDQSRWLREAEKQLRVLENLVDSNLEEEKLKPQLSMGEDVQSPGKGEPLHPNVRAPLSHVVRAATIDLPRLGNKLPARHHLGKLSGLYQMKGCTFNPEWKVPDISDTHFNLDVVNECPSRNWKYLTPAKFWPKSISYFPVQVGVKPKYPDNVMQHESIVGKYLTRLYEAGILYKRISKHLVTFKGQPYNWEQQHLVNQHHIYDGATSSKINGRQTDRRRRNTVKPTCRKDDPKRDFDMVRQVSNTRSRVRPCANNGGDKHPPESGSLACWGGKESRIIKSDSSRDSSAPVDSRGRPKSTRSFSPLSRRKTTGNHHHSSVFPSSVEATTRGRSTPGKSVSPRDSSAIPVRTSGASDKNSPLEEENVWYLRGNTSWPNRITGKLFLVDKNSRNTEEARLVVDFSQFSKGKNAMRFPRYWSPNLSTLRRILPVGMPRISLDLSQAFYHLPLNPASSSRLAVSDGQRVYYFRKAPMGVGLSPFLLHLFTTALGSEISRRFNVWTFTYMDDFLLCHPNARHLNAISHAVCSFLQELGIRINFDKTTPSPVNEIRFLGYQIDENFMKIEESRWKELRTVIKKIKVGEWYDWKCIQRFVGHLNFVLPFTKGNIEMLKPMYAAITNQVNFSFSSSYRTLLYKLTMGVCKLRIKPKSSVPLPRVATDATPTHGAISHITGGSAVFAFSKVRDIHVQELLMSCLAKIMIKPRCLLSDSTFVCHKRYQTLPWHFAMLAKQLLKPIQLYFVPSKYNPADGPSRHKPPDWTAFPYTPLSKAIYIPHRLCGT</sequence>
<comment type="function">
    <text evidence="1">Multifunctional enzyme that converts the viral RNA genome into dsDNA in viral cytoplasmic capsids. This enzyme displays a DNA polymerase activity that can copy either DNA or RNA templates, and a ribonuclease H (RNase H) activity that cleaves the RNA strand of RNA-DNA heteroduplexes in a partially processive 3'- to 5'-endonucleasic mode. Neo-synthesized pregenomic RNA (pgRNA) are encapsidated together with the P protein, and reverse-transcribed inside the nucleocapsid. Initiation of reverse-transcription occurs first by binding the epsilon loop on the pgRNA genome, and is initiated by protein priming, thereby the 5'-end of (-)DNA is covalently linked to P protein. Partial (+)DNA is synthesized from the (-)DNA template and generates the relaxed circular DNA (RC-DNA) genome. After budding and infection, the RC-DNA migrates in the nucleus, and is converted into a plasmid-like covalently closed circular DNA (cccDNA). The activity of P protein does not seem to be necessary for cccDNA generation, and is presumably released from (+)DNA by host nuclear DNA repair machinery (By similarity).</text>
</comment>
<comment type="catalytic activity">
    <reaction evidence="2">
        <text>DNA(n) + a 2'-deoxyribonucleoside 5'-triphosphate = DNA(n+1) + diphosphate</text>
        <dbReference type="Rhea" id="RHEA:22508"/>
        <dbReference type="Rhea" id="RHEA-COMP:17339"/>
        <dbReference type="Rhea" id="RHEA-COMP:17340"/>
        <dbReference type="ChEBI" id="CHEBI:33019"/>
        <dbReference type="ChEBI" id="CHEBI:61560"/>
        <dbReference type="ChEBI" id="CHEBI:173112"/>
        <dbReference type="EC" id="2.7.7.7"/>
    </reaction>
</comment>
<comment type="catalytic activity">
    <reaction evidence="2">
        <text>DNA(n) + a 2'-deoxyribonucleoside 5'-triphosphate = DNA(n+1) + diphosphate</text>
        <dbReference type="Rhea" id="RHEA:22508"/>
        <dbReference type="Rhea" id="RHEA-COMP:17339"/>
        <dbReference type="Rhea" id="RHEA-COMP:17340"/>
        <dbReference type="ChEBI" id="CHEBI:33019"/>
        <dbReference type="ChEBI" id="CHEBI:61560"/>
        <dbReference type="ChEBI" id="CHEBI:173112"/>
        <dbReference type="EC" id="2.7.7.49"/>
    </reaction>
</comment>
<comment type="catalytic activity">
    <reaction>
        <text>Endonucleolytic cleavage to 5'-phosphomonoester.</text>
        <dbReference type="EC" id="3.1.26.4"/>
    </reaction>
</comment>
<comment type="activity regulation">
    <text>Activated by host HSP70 and HSP40 in vitro to be able to bind the epsilon loop of the pgRNA. Because deletion of the RNase H region renders the protein partly chaperone-independent, the chaperones may be needed indirectly to relieve occlusion of the RNA-binding site by this domain.</text>
</comment>
<comment type="domain">
    <text evidence="1">Terminal protein domain (TP) is hepadnavirus-specific. Spacer domain is highly variable and separates the TP and RT domains. Polymerase/reverse-transcriptase domain (RT) and ribonuclease H domain (RH) are similar to retrovirus reverse transcriptase/RNase H (By similarity).</text>
</comment>
<comment type="domain">
    <text evidence="1">The polymerase/reverse transcriptase (RT) and ribonuclease H (RH) domains are structured in five subdomains: finger, palm, thumb, connection and RNase H. Within the palm subdomain, the 'primer grip' region is thought to be involved in the positioning of the primer terminus for accommodating the incoming nucleotide. The RH domain stabilizes the association of RT with primer-template (By similarity).</text>
</comment>
<comment type="similarity">
    <text evidence="4">Belongs to the hepadnaviridae P protein family.</text>
</comment>
<dbReference type="EC" id="2.7.7.7"/>
<dbReference type="EC" id="2.7.7.49"/>
<dbReference type="EC" id="3.1.26.4"/>
<dbReference type="EMBL" id="K01834">
    <property type="protein sequence ID" value="AAA45742.1"/>
    <property type="molecule type" value="Genomic_DNA"/>
</dbReference>
<dbReference type="Proteomes" id="UP000180685">
    <property type="component" value="Genome"/>
</dbReference>
<dbReference type="GO" id="GO:0003677">
    <property type="term" value="F:DNA binding"/>
    <property type="evidence" value="ECO:0007669"/>
    <property type="project" value="UniProtKB-KW"/>
</dbReference>
<dbReference type="GO" id="GO:0003887">
    <property type="term" value="F:DNA-directed DNA polymerase activity"/>
    <property type="evidence" value="ECO:0007669"/>
    <property type="project" value="UniProtKB-KW"/>
</dbReference>
<dbReference type="GO" id="GO:0046872">
    <property type="term" value="F:metal ion binding"/>
    <property type="evidence" value="ECO:0007669"/>
    <property type="project" value="UniProtKB-KW"/>
</dbReference>
<dbReference type="GO" id="GO:0003964">
    <property type="term" value="F:RNA-directed DNA polymerase activity"/>
    <property type="evidence" value="ECO:0000314"/>
    <property type="project" value="UniProtKB"/>
</dbReference>
<dbReference type="GO" id="GO:0004523">
    <property type="term" value="F:RNA-DNA hybrid ribonuclease activity"/>
    <property type="evidence" value="ECO:0000314"/>
    <property type="project" value="UniProtKB"/>
</dbReference>
<dbReference type="GO" id="GO:0006260">
    <property type="term" value="P:DNA replication"/>
    <property type="evidence" value="ECO:0007669"/>
    <property type="project" value="UniProtKB-KW"/>
</dbReference>
<dbReference type="GO" id="GO:0001171">
    <property type="term" value="P:reverse transcription"/>
    <property type="evidence" value="ECO:0000314"/>
    <property type="project" value="GO_Central"/>
</dbReference>
<dbReference type="FunFam" id="3.30.70.270:FF:000058">
    <property type="entry name" value="Protein P"/>
    <property type="match status" value="1"/>
</dbReference>
<dbReference type="Gene3D" id="3.30.70.270">
    <property type="match status" value="1"/>
</dbReference>
<dbReference type="Gene3D" id="3.10.10.10">
    <property type="entry name" value="HIV Type 1 Reverse Transcriptase, subunit A, domain 1"/>
    <property type="match status" value="1"/>
</dbReference>
<dbReference type="InterPro" id="IPR043502">
    <property type="entry name" value="DNA/RNA_pol_sf"/>
</dbReference>
<dbReference type="InterPro" id="IPR001462">
    <property type="entry name" value="DNApol_viral_C"/>
</dbReference>
<dbReference type="InterPro" id="IPR000201">
    <property type="entry name" value="DNApol_viral_N"/>
</dbReference>
<dbReference type="InterPro" id="IPR052055">
    <property type="entry name" value="Hepadnavirus_pol/RT"/>
</dbReference>
<dbReference type="InterPro" id="IPR043128">
    <property type="entry name" value="Rev_trsase/Diguanyl_cyclase"/>
</dbReference>
<dbReference type="InterPro" id="IPR000477">
    <property type="entry name" value="RT_dom"/>
</dbReference>
<dbReference type="PANTHER" id="PTHR33050">
    <property type="entry name" value="REVERSE TRANSCRIPTASE DOMAIN-CONTAINING PROTEIN"/>
    <property type="match status" value="1"/>
</dbReference>
<dbReference type="PANTHER" id="PTHR33050:SF7">
    <property type="entry name" value="RIBONUCLEASE H"/>
    <property type="match status" value="1"/>
</dbReference>
<dbReference type="Pfam" id="PF00336">
    <property type="entry name" value="DNA_pol_viral_C"/>
    <property type="match status" value="1"/>
</dbReference>
<dbReference type="Pfam" id="PF00242">
    <property type="entry name" value="DNA_pol_viral_N"/>
    <property type="match status" value="1"/>
</dbReference>
<dbReference type="Pfam" id="PF00078">
    <property type="entry name" value="RVT_1"/>
    <property type="match status" value="1"/>
</dbReference>
<dbReference type="SUPFAM" id="SSF56672">
    <property type="entry name" value="DNA/RNA polymerases"/>
    <property type="match status" value="1"/>
</dbReference>
<dbReference type="PROSITE" id="PS50878">
    <property type="entry name" value="RT_POL"/>
    <property type="match status" value="1"/>
</dbReference>
<protein>
    <recommendedName>
        <fullName>Protein P</fullName>
    </recommendedName>
    <domain>
        <recommendedName>
            <fullName>DNA-directed DNA polymerase</fullName>
            <ecNumber>2.7.7.7</ecNumber>
        </recommendedName>
    </domain>
    <domain>
        <recommendedName>
            <fullName>RNA-directed DNA polymerase</fullName>
            <ecNumber>2.7.7.49</ecNumber>
        </recommendedName>
    </domain>
    <domain>
        <recommendedName>
            <fullName>Ribonuclease H</fullName>
            <ecNumber>3.1.26.4</ecNumber>
        </recommendedName>
    </domain>
</protein>
<feature type="chain" id="PRO_0000222327" description="Protein P">
    <location>
        <begin position="1"/>
        <end position="836"/>
    </location>
</feature>
<feature type="domain" description="Reverse transcriptase" evidence="2">
    <location>
        <begin position="424"/>
        <end position="613"/>
    </location>
</feature>
<feature type="region of interest" description="Terminal protein domain (TP)" evidence="1">
    <location>
        <begin position="51"/>
        <end position="250"/>
    </location>
</feature>
<feature type="region of interest" description="Spacer" evidence="1">
    <location>
        <begin position="251"/>
        <end position="414"/>
    </location>
</feature>
<feature type="region of interest" description="Disordered" evidence="3">
    <location>
        <begin position="263"/>
        <end position="417"/>
    </location>
</feature>
<feature type="region of interest" description="Polymerase/reverse transcriptase domain (RT)" evidence="1">
    <location>
        <begin position="415"/>
        <end position="703"/>
    </location>
</feature>
<feature type="region of interest" description="RnaseH domain (RH)" evidence="1">
    <location>
        <begin position="704"/>
        <end position="836"/>
    </location>
</feature>
<feature type="compositionally biased region" description="Basic and acidic residues" evidence="3">
    <location>
        <begin position="285"/>
        <end position="296"/>
    </location>
</feature>
<feature type="compositionally biased region" description="Basic and acidic residues" evidence="3">
    <location>
        <begin position="331"/>
        <end position="342"/>
    </location>
</feature>
<feature type="compositionally biased region" description="Basic residues" evidence="3">
    <location>
        <begin position="364"/>
        <end position="375"/>
    </location>
</feature>
<feature type="compositionally biased region" description="Polar residues" evidence="3">
    <location>
        <begin position="377"/>
        <end position="400"/>
    </location>
</feature>
<feature type="binding site" evidence="2">
    <location>
        <position position="496"/>
    </location>
    <ligand>
        <name>Mg(2+)</name>
        <dbReference type="ChEBI" id="CHEBI:18420"/>
        <note>catalytic</note>
    </ligand>
</feature>
<feature type="binding site" evidence="2">
    <location>
        <position position="563"/>
    </location>
    <ligand>
        <name>Mg(2+)</name>
        <dbReference type="ChEBI" id="CHEBI:18420"/>
        <note>catalytic</note>
    </ligand>
</feature>
<feature type="binding site" evidence="2">
    <location>
        <position position="564"/>
    </location>
    <ligand>
        <name>Mg(2+)</name>
        <dbReference type="ChEBI" id="CHEBI:18420"/>
        <note>catalytic</note>
    </ligand>
</feature>
<feature type="site" description="Priming of reverse-transcription by covalently linking the first nucleotide of the (-)DNA" evidence="1">
    <location>
        <position position="146"/>
    </location>
</feature>
<reference key="1">
    <citation type="journal article" date="1984" name="J. Virol.">
        <title>Nucleotide sequence of a cloned duck hepatitis B virus genome: comparison with woodchuck and human hepatitis B virus sequences.</title>
        <authorList>
            <person name="Mandart E."/>
            <person name="Kay A."/>
            <person name="Galibert F."/>
        </authorList>
    </citation>
    <scope>NUCLEOTIDE SEQUENCE [GENOMIC DNA]</scope>
</reference>
<reference key="2">
    <citation type="journal article" date="1984" name="J. Virol.">
        <title>Mapping of the cohesive overlap of duck hepatitis B virus DNA and of the site of initiation of reverse transcription.</title>
        <authorList>
            <person name="Molnar-Kimber K.L."/>
            <person name="Summers J.W."/>
            <person name="Mason W.S."/>
        </authorList>
    </citation>
    <scope>NUCLEOTIDE SEQUENCE [GENOMIC DNA] OF 794-836</scope>
</reference>
<reference key="3">
    <citation type="journal article" date="2003" name="J. Biol. Chem.">
        <title>Efficient Hsp90-independent in vitro activation by Hsc70 and Hsp40 of duck hepatitis B virus reverse transcriptase, an assumed Hsp90 client protein.</title>
        <authorList>
            <person name="Beck J."/>
            <person name="Nassal M."/>
        </authorList>
    </citation>
    <scope>ACTIVATION BY HOST HSC70 AND HSP40</scope>
</reference>
<reference key="4">
    <citation type="journal article" date="2007" name="J. Virol.">
        <title>Chaperones activate hepadnavirus reverse transcriptase by transiently exposing a C-proximal region in the terminal protein domain that contributes to epsilon RNA binding.</title>
        <authorList>
            <person name="Stahl M."/>
            <person name="Beck J."/>
            <person name="Nassal M."/>
        </authorList>
    </citation>
    <scope>ACTIVATION BY HOST CHAPERONES</scope>
</reference>
<reference key="5">
    <citation type="journal article" date="2007" name="World J. Gastroenterol.">
        <title>Hepatitis B virus replication.</title>
        <authorList>
            <person name="Beck J."/>
            <person name="Nassal M."/>
        </authorList>
    </citation>
    <scope>REVIEW</scope>
</reference>
<gene>
    <name type="primary">P</name>
</gene>
<organismHost>
    <name type="scientific">Anas</name>
    <name type="common">ducks</name>
    <dbReference type="NCBI Taxonomy" id="8835"/>
</organismHost>
<proteinExistence type="inferred from homology"/>
<keyword id="KW-0235">DNA replication</keyword>
<keyword id="KW-0238">DNA-binding</keyword>
<keyword id="KW-0239">DNA-directed DNA polymerase</keyword>
<keyword id="KW-0255">Endonuclease</keyword>
<keyword id="KW-0378">Hydrolase</keyword>
<keyword id="KW-0460">Magnesium</keyword>
<keyword id="KW-0479">Metal-binding</keyword>
<keyword id="KW-0511">Multifunctional enzyme</keyword>
<keyword id="KW-0540">Nuclease</keyword>
<keyword id="KW-0548">Nucleotidyltransferase</keyword>
<keyword id="KW-0695">RNA-directed DNA polymerase</keyword>
<keyword id="KW-0808">Transferase</keyword>
<evidence type="ECO:0000250" key="1"/>
<evidence type="ECO:0000255" key="2">
    <source>
        <dbReference type="PROSITE-ProRule" id="PRU00405"/>
    </source>
</evidence>
<evidence type="ECO:0000256" key="3">
    <source>
        <dbReference type="SAM" id="MobiDB-lite"/>
    </source>
</evidence>
<evidence type="ECO:0000305" key="4"/>
<name>DPOL_DHBV1</name>
<organism>
    <name type="scientific">Duck hepatitis B virus (strain United States/DHBV-16)</name>
    <name type="common">DHBV</name>
    <dbReference type="NCBI Taxonomy" id="489543"/>
    <lineage>
        <taxon>Viruses</taxon>
        <taxon>Riboviria</taxon>
        <taxon>Pararnavirae</taxon>
        <taxon>Artverviricota</taxon>
        <taxon>Revtraviricetes</taxon>
        <taxon>Blubervirales</taxon>
        <taxon>Hepadnaviridae</taxon>
        <taxon>Avihepadnavirus</taxon>
        <taxon>Duck hepatitis B virus</taxon>
    </lineage>
</organism>